<keyword id="KW-0687">Ribonucleoprotein</keyword>
<keyword id="KW-0689">Ribosomal protein</keyword>
<keyword id="KW-0694">RNA-binding</keyword>
<keyword id="KW-0699">rRNA-binding</keyword>
<gene>
    <name evidence="1" type="primary">rpsH</name>
    <name type="ordered locus">SAS2127</name>
</gene>
<comment type="function">
    <text evidence="1">One of the primary rRNA binding proteins, it binds directly to 16S rRNA central domain where it helps coordinate assembly of the platform of the 30S subunit.</text>
</comment>
<comment type="subunit">
    <text evidence="1">Part of the 30S ribosomal subunit. Contacts proteins S5 and S12.</text>
</comment>
<comment type="similarity">
    <text evidence="1">Belongs to the universal ribosomal protein uS8 family.</text>
</comment>
<dbReference type="EMBL" id="BX571857">
    <property type="protein sequence ID" value="CAG43938.1"/>
    <property type="molecule type" value="Genomic_DNA"/>
</dbReference>
<dbReference type="RefSeq" id="WP_000178881.1">
    <property type="nucleotide sequence ID" value="NC_002953.3"/>
</dbReference>
<dbReference type="SMR" id="Q6G785"/>
<dbReference type="GeneID" id="98346548"/>
<dbReference type="KEGG" id="sas:SAS2127"/>
<dbReference type="HOGENOM" id="CLU_098428_0_2_9"/>
<dbReference type="GO" id="GO:1990904">
    <property type="term" value="C:ribonucleoprotein complex"/>
    <property type="evidence" value="ECO:0007669"/>
    <property type="project" value="UniProtKB-KW"/>
</dbReference>
<dbReference type="GO" id="GO:0005840">
    <property type="term" value="C:ribosome"/>
    <property type="evidence" value="ECO:0007669"/>
    <property type="project" value="UniProtKB-KW"/>
</dbReference>
<dbReference type="GO" id="GO:0019843">
    <property type="term" value="F:rRNA binding"/>
    <property type="evidence" value="ECO:0007669"/>
    <property type="project" value="UniProtKB-UniRule"/>
</dbReference>
<dbReference type="GO" id="GO:0003735">
    <property type="term" value="F:structural constituent of ribosome"/>
    <property type="evidence" value="ECO:0007669"/>
    <property type="project" value="InterPro"/>
</dbReference>
<dbReference type="GO" id="GO:0006412">
    <property type="term" value="P:translation"/>
    <property type="evidence" value="ECO:0007669"/>
    <property type="project" value="UniProtKB-UniRule"/>
</dbReference>
<dbReference type="FunFam" id="3.30.1370.30:FF:000002">
    <property type="entry name" value="30S ribosomal protein S8"/>
    <property type="match status" value="1"/>
</dbReference>
<dbReference type="FunFam" id="3.30.1490.10:FF:000001">
    <property type="entry name" value="30S ribosomal protein S8"/>
    <property type="match status" value="1"/>
</dbReference>
<dbReference type="Gene3D" id="3.30.1370.30">
    <property type="match status" value="1"/>
</dbReference>
<dbReference type="Gene3D" id="3.30.1490.10">
    <property type="match status" value="1"/>
</dbReference>
<dbReference type="HAMAP" id="MF_01302_B">
    <property type="entry name" value="Ribosomal_uS8_B"/>
    <property type="match status" value="1"/>
</dbReference>
<dbReference type="InterPro" id="IPR000630">
    <property type="entry name" value="Ribosomal_uS8"/>
</dbReference>
<dbReference type="InterPro" id="IPR047863">
    <property type="entry name" value="Ribosomal_uS8_CS"/>
</dbReference>
<dbReference type="InterPro" id="IPR035987">
    <property type="entry name" value="Ribosomal_uS8_sf"/>
</dbReference>
<dbReference type="NCBIfam" id="NF001109">
    <property type="entry name" value="PRK00136.1"/>
    <property type="match status" value="1"/>
</dbReference>
<dbReference type="PANTHER" id="PTHR11758">
    <property type="entry name" value="40S RIBOSOMAL PROTEIN S15A"/>
    <property type="match status" value="1"/>
</dbReference>
<dbReference type="Pfam" id="PF00410">
    <property type="entry name" value="Ribosomal_S8"/>
    <property type="match status" value="1"/>
</dbReference>
<dbReference type="SUPFAM" id="SSF56047">
    <property type="entry name" value="Ribosomal protein S8"/>
    <property type="match status" value="1"/>
</dbReference>
<dbReference type="PROSITE" id="PS00053">
    <property type="entry name" value="RIBOSOMAL_S8"/>
    <property type="match status" value="1"/>
</dbReference>
<proteinExistence type="inferred from homology"/>
<name>RS8_STAAS</name>
<feature type="chain" id="PRO_0000126487" description="Small ribosomal subunit protein uS8">
    <location>
        <begin position="1"/>
        <end position="132"/>
    </location>
</feature>
<evidence type="ECO:0000255" key="1">
    <source>
        <dbReference type="HAMAP-Rule" id="MF_01302"/>
    </source>
</evidence>
<evidence type="ECO:0000305" key="2"/>
<reference key="1">
    <citation type="journal article" date="2004" name="Proc. Natl. Acad. Sci. U.S.A.">
        <title>Complete genomes of two clinical Staphylococcus aureus strains: evidence for the rapid evolution of virulence and drug resistance.</title>
        <authorList>
            <person name="Holden M.T.G."/>
            <person name="Feil E.J."/>
            <person name="Lindsay J.A."/>
            <person name="Peacock S.J."/>
            <person name="Day N.P.J."/>
            <person name="Enright M.C."/>
            <person name="Foster T.J."/>
            <person name="Moore C.E."/>
            <person name="Hurst L."/>
            <person name="Atkin R."/>
            <person name="Barron A."/>
            <person name="Bason N."/>
            <person name="Bentley S.D."/>
            <person name="Chillingworth C."/>
            <person name="Chillingworth T."/>
            <person name="Churcher C."/>
            <person name="Clark L."/>
            <person name="Corton C."/>
            <person name="Cronin A."/>
            <person name="Doggett J."/>
            <person name="Dowd L."/>
            <person name="Feltwell T."/>
            <person name="Hance Z."/>
            <person name="Harris B."/>
            <person name="Hauser H."/>
            <person name="Holroyd S."/>
            <person name="Jagels K."/>
            <person name="James K.D."/>
            <person name="Lennard N."/>
            <person name="Line A."/>
            <person name="Mayes R."/>
            <person name="Moule S."/>
            <person name="Mungall K."/>
            <person name="Ormond D."/>
            <person name="Quail M.A."/>
            <person name="Rabbinowitsch E."/>
            <person name="Rutherford K.M."/>
            <person name="Sanders M."/>
            <person name="Sharp S."/>
            <person name="Simmonds M."/>
            <person name="Stevens K."/>
            <person name="Whitehead S."/>
            <person name="Barrell B.G."/>
            <person name="Spratt B.G."/>
            <person name="Parkhill J."/>
        </authorList>
    </citation>
    <scope>NUCLEOTIDE SEQUENCE [LARGE SCALE GENOMIC DNA]</scope>
    <source>
        <strain>MSSA476</strain>
    </source>
</reference>
<sequence length="132" mass="14831">MTMTDPIADMLTRVRNANMVRHEKLELPASNIKKEIAEILKSEGFIKNVEYVEDDKQGVLRLFLKYGQNDERVITGLKRISKPGLRVYAKASEMPKVLNGLGIALVSTSEGVITDKEARKRNVGGEIIAYVW</sequence>
<protein>
    <recommendedName>
        <fullName evidence="1">Small ribosomal subunit protein uS8</fullName>
    </recommendedName>
    <alternativeName>
        <fullName evidence="2">30S ribosomal protein S8</fullName>
    </alternativeName>
</protein>
<accession>Q6G785</accession>
<organism>
    <name type="scientific">Staphylococcus aureus (strain MSSA476)</name>
    <dbReference type="NCBI Taxonomy" id="282459"/>
    <lineage>
        <taxon>Bacteria</taxon>
        <taxon>Bacillati</taxon>
        <taxon>Bacillota</taxon>
        <taxon>Bacilli</taxon>
        <taxon>Bacillales</taxon>
        <taxon>Staphylococcaceae</taxon>
        <taxon>Staphylococcus</taxon>
    </lineage>
</organism>